<accession>A4GAG9</accession>
<feature type="chain" id="PRO_1000055122" description="ATP synthase subunit beta">
    <location>
        <begin position="1"/>
        <end position="466"/>
    </location>
</feature>
<feature type="binding site" evidence="1">
    <location>
        <begin position="148"/>
        <end position="155"/>
    </location>
    <ligand>
        <name>ATP</name>
        <dbReference type="ChEBI" id="CHEBI:30616"/>
    </ligand>
</feature>
<name>ATPB_HERAR</name>
<dbReference type="EC" id="7.1.2.2" evidence="1"/>
<dbReference type="EMBL" id="CU207211">
    <property type="protein sequence ID" value="CAL63506.1"/>
    <property type="molecule type" value="Genomic_DNA"/>
</dbReference>
<dbReference type="SMR" id="A4GAG9"/>
<dbReference type="STRING" id="204773.HEAR3405"/>
<dbReference type="KEGG" id="har:HEAR3405"/>
<dbReference type="eggNOG" id="COG0055">
    <property type="taxonomic scope" value="Bacteria"/>
</dbReference>
<dbReference type="HOGENOM" id="CLU_022398_0_2_4"/>
<dbReference type="OrthoDB" id="9801639at2"/>
<dbReference type="Proteomes" id="UP000006697">
    <property type="component" value="Chromosome"/>
</dbReference>
<dbReference type="GO" id="GO:0005886">
    <property type="term" value="C:plasma membrane"/>
    <property type="evidence" value="ECO:0007669"/>
    <property type="project" value="UniProtKB-SubCell"/>
</dbReference>
<dbReference type="GO" id="GO:0045259">
    <property type="term" value="C:proton-transporting ATP synthase complex"/>
    <property type="evidence" value="ECO:0007669"/>
    <property type="project" value="UniProtKB-KW"/>
</dbReference>
<dbReference type="GO" id="GO:0005524">
    <property type="term" value="F:ATP binding"/>
    <property type="evidence" value="ECO:0007669"/>
    <property type="project" value="UniProtKB-UniRule"/>
</dbReference>
<dbReference type="GO" id="GO:0016887">
    <property type="term" value="F:ATP hydrolysis activity"/>
    <property type="evidence" value="ECO:0007669"/>
    <property type="project" value="InterPro"/>
</dbReference>
<dbReference type="GO" id="GO:0046933">
    <property type="term" value="F:proton-transporting ATP synthase activity, rotational mechanism"/>
    <property type="evidence" value="ECO:0007669"/>
    <property type="project" value="UniProtKB-UniRule"/>
</dbReference>
<dbReference type="CDD" id="cd18110">
    <property type="entry name" value="ATP-synt_F1_beta_C"/>
    <property type="match status" value="1"/>
</dbReference>
<dbReference type="CDD" id="cd18115">
    <property type="entry name" value="ATP-synt_F1_beta_N"/>
    <property type="match status" value="1"/>
</dbReference>
<dbReference type="CDD" id="cd01133">
    <property type="entry name" value="F1-ATPase_beta_CD"/>
    <property type="match status" value="1"/>
</dbReference>
<dbReference type="FunFam" id="1.10.1140.10:FF:000001">
    <property type="entry name" value="ATP synthase subunit beta"/>
    <property type="match status" value="1"/>
</dbReference>
<dbReference type="FunFam" id="3.40.50.300:FF:000004">
    <property type="entry name" value="ATP synthase subunit beta"/>
    <property type="match status" value="1"/>
</dbReference>
<dbReference type="Gene3D" id="2.40.10.170">
    <property type="match status" value="1"/>
</dbReference>
<dbReference type="Gene3D" id="1.10.1140.10">
    <property type="entry name" value="Bovine Mitochondrial F1-atpase, Atp Synthase Beta Chain, Chain D, domain 3"/>
    <property type="match status" value="1"/>
</dbReference>
<dbReference type="Gene3D" id="3.40.50.300">
    <property type="entry name" value="P-loop containing nucleotide triphosphate hydrolases"/>
    <property type="match status" value="1"/>
</dbReference>
<dbReference type="HAMAP" id="MF_01347">
    <property type="entry name" value="ATP_synth_beta_bact"/>
    <property type="match status" value="1"/>
</dbReference>
<dbReference type="InterPro" id="IPR003593">
    <property type="entry name" value="AAA+_ATPase"/>
</dbReference>
<dbReference type="InterPro" id="IPR055190">
    <property type="entry name" value="ATP-synt_VA_C"/>
</dbReference>
<dbReference type="InterPro" id="IPR005722">
    <property type="entry name" value="ATP_synth_F1_bsu"/>
</dbReference>
<dbReference type="InterPro" id="IPR020003">
    <property type="entry name" value="ATPase_a/bsu_AS"/>
</dbReference>
<dbReference type="InterPro" id="IPR050053">
    <property type="entry name" value="ATPase_alpha/beta_chains"/>
</dbReference>
<dbReference type="InterPro" id="IPR004100">
    <property type="entry name" value="ATPase_F1/V1/A1_a/bsu_N"/>
</dbReference>
<dbReference type="InterPro" id="IPR036121">
    <property type="entry name" value="ATPase_F1/V1/A1_a/bsu_N_sf"/>
</dbReference>
<dbReference type="InterPro" id="IPR000194">
    <property type="entry name" value="ATPase_F1/V1/A1_a/bsu_nucl-bd"/>
</dbReference>
<dbReference type="InterPro" id="IPR024034">
    <property type="entry name" value="ATPase_F1/V1_b/a_C"/>
</dbReference>
<dbReference type="InterPro" id="IPR027417">
    <property type="entry name" value="P-loop_NTPase"/>
</dbReference>
<dbReference type="NCBIfam" id="TIGR01039">
    <property type="entry name" value="atpD"/>
    <property type="match status" value="1"/>
</dbReference>
<dbReference type="PANTHER" id="PTHR15184">
    <property type="entry name" value="ATP SYNTHASE"/>
    <property type="match status" value="1"/>
</dbReference>
<dbReference type="PANTHER" id="PTHR15184:SF71">
    <property type="entry name" value="ATP SYNTHASE SUBUNIT BETA, MITOCHONDRIAL"/>
    <property type="match status" value="1"/>
</dbReference>
<dbReference type="Pfam" id="PF00006">
    <property type="entry name" value="ATP-synt_ab"/>
    <property type="match status" value="1"/>
</dbReference>
<dbReference type="Pfam" id="PF02874">
    <property type="entry name" value="ATP-synt_ab_N"/>
    <property type="match status" value="1"/>
</dbReference>
<dbReference type="Pfam" id="PF22919">
    <property type="entry name" value="ATP-synt_VA_C"/>
    <property type="match status" value="1"/>
</dbReference>
<dbReference type="SMART" id="SM00382">
    <property type="entry name" value="AAA"/>
    <property type="match status" value="1"/>
</dbReference>
<dbReference type="SUPFAM" id="SSF47917">
    <property type="entry name" value="C-terminal domain of alpha and beta subunits of F1 ATP synthase"/>
    <property type="match status" value="1"/>
</dbReference>
<dbReference type="SUPFAM" id="SSF50615">
    <property type="entry name" value="N-terminal domain of alpha and beta subunits of F1 ATP synthase"/>
    <property type="match status" value="1"/>
</dbReference>
<dbReference type="SUPFAM" id="SSF52540">
    <property type="entry name" value="P-loop containing nucleoside triphosphate hydrolases"/>
    <property type="match status" value="1"/>
</dbReference>
<dbReference type="PROSITE" id="PS00152">
    <property type="entry name" value="ATPASE_ALPHA_BETA"/>
    <property type="match status" value="1"/>
</dbReference>
<gene>
    <name evidence="1" type="primary">atpD</name>
    <name type="ordered locus">HEAR3405</name>
</gene>
<reference key="1">
    <citation type="journal article" date="2007" name="PLoS Genet.">
        <title>A tale of two oxidation states: bacterial colonization of arsenic-rich environments.</title>
        <authorList>
            <person name="Muller D."/>
            <person name="Medigue C."/>
            <person name="Koechler S."/>
            <person name="Barbe V."/>
            <person name="Barakat M."/>
            <person name="Talla E."/>
            <person name="Bonnefoy V."/>
            <person name="Krin E."/>
            <person name="Arsene-Ploetze F."/>
            <person name="Carapito C."/>
            <person name="Chandler M."/>
            <person name="Cournoyer B."/>
            <person name="Cruveiller S."/>
            <person name="Dossat C."/>
            <person name="Duval S."/>
            <person name="Heymann M."/>
            <person name="Leize E."/>
            <person name="Lieutaud A."/>
            <person name="Lievremont D."/>
            <person name="Makita Y."/>
            <person name="Mangenot S."/>
            <person name="Nitschke W."/>
            <person name="Ortet P."/>
            <person name="Perdrial N."/>
            <person name="Schoepp B."/>
            <person name="Siguier P."/>
            <person name="Simeonova D.D."/>
            <person name="Rouy Z."/>
            <person name="Segurens B."/>
            <person name="Turlin E."/>
            <person name="Vallenet D."/>
            <person name="van Dorsselaer A."/>
            <person name="Weiss S."/>
            <person name="Weissenbach J."/>
            <person name="Lett M.-C."/>
            <person name="Danchin A."/>
            <person name="Bertin P.N."/>
        </authorList>
    </citation>
    <scope>NUCLEOTIDE SEQUENCE [LARGE SCALE GENOMIC DNA]</scope>
    <source>
        <strain>ULPAs1</strain>
    </source>
</reference>
<sequence length="466" mass="50395">MADGKIVQCIGAVVDVEFPRNAMPKIYDALKMAGSELTLEVQQQLGDGIVRTIALGTSDGLRRGMIIQNTGNPITVPVGKATLGRIMDVLGNPIDECGPVSHERTASIHRKAPAYDELSPSQDLLETGIKVIDLVCPFAKGGKVGLFGGAGVGKTVNMMELINNIAKAHSGLSVFAGVGERTREGNDFYHEMADAKVVDLENPENSKVAMVYGQMNEPPGNRLRVALTGLTMAEAFRDEGKDVLFFVDNIYRFTLAGTEVSALLGRMPSAVGYQPTLAEEMGRLQERITSTKTGSITSIQAVYVPADDLTDPSPATTFAHLDSTVVLSRDIASLGIYPAVDPLDSTSRQLDPLVVGQDHYDTARAVQGTLQRYKELRDIIAILGMDELAPEDKLLVARARKMQRFLSQPFHVAEVFTGAPGKYVSLKDTINGFKMIASGELDHLPEQAFYMVGTIEEAIEKAKKLN</sequence>
<keyword id="KW-0066">ATP synthesis</keyword>
<keyword id="KW-0067">ATP-binding</keyword>
<keyword id="KW-0997">Cell inner membrane</keyword>
<keyword id="KW-1003">Cell membrane</keyword>
<keyword id="KW-0139">CF(1)</keyword>
<keyword id="KW-0375">Hydrogen ion transport</keyword>
<keyword id="KW-0406">Ion transport</keyword>
<keyword id="KW-0472">Membrane</keyword>
<keyword id="KW-0547">Nucleotide-binding</keyword>
<keyword id="KW-1185">Reference proteome</keyword>
<keyword id="KW-1278">Translocase</keyword>
<keyword id="KW-0813">Transport</keyword>
<proteinExistence type="inferred from homology"/>
<protein>
    <recommendedName>
        <fullName evidence="1">ATP synthase subunit beta</fullName>
        <ecNumber evidence="1">7.1.2.2</ecNumber>
    </recommendedName>
    <alternativeName>
        <fullName evidence="1">ATP synthase F1 sector subunit beta</fullName>
    </alternativeName>
    <alternativeName>
        <fullName evidence="1">F-ATPase subunit beta</fullName>
    </alternativeName>
</protein>
<organism>
    <name type="scientific">Herminiimonas arsenicoxydans</name>
    <dbReference type="NCBI Taxonomy" id="204773"/>
    <lineage>
        <taxon>Bacteria</taxon>
        <taxon>Pseudomonadati</taxon>
        <taxon>Pseudomonadota</taxon>
        <taxon>Betaproteobacteria</taxon>
        <taxon>Burkholderiales</taxon>
        <taxon>Oxalobacteraceae</taxon>
        <taxon>Herminiimonas</taxon>
    </lineage>
</organism>
<evidence type="ECO:0000255" key="1">
    <source>
        <dbReference type="HAMAP-Rule" id="MF_01347"/>
    </source>
</evidence>
<comment type="function">
    <text evidence="1">Produces ATP from ADP in the presence of a proton gradient across the membrane. The catalytic sites are hosted primarily by the beta subunits.</text>
</comment>
<comment type="catalytic activity">
    <reaction evidence="1">
        <text>ATP + H2O + 4 H(+)(in) = ADP + phosphate + 5 H(+)(out)</text>
        <dbReference type="Rhea" id="RHEA:57720"/>
        <dbReference type="ChEBI" id="CHEBI:15377"/>
        <dbReference type="ChEBI" id="CHEBI:15378"/>
        <dbReference type="ChEBI" id="CHEBI:30616"/>
        <dbReference type="ChEBI" id="CHEBI:43474"/>
        <dbReference type="ChEBI" id="CHEBI:456216"/>
        <dbReference type="EC" id="7.1.2.2"/>
    </reaction>
</comment>
<comment type="subunit">
    <text evidence="1">F-type ATPases have 2 components, CF(1) - the catalytic core - and CF(0) - the membrane proton channel. CF(1) has five subunits: alpha(3), beta(3), gamma(1), delta(1), epsilon(1). CF(0) has three main subunits: a(1), b(2) and c(9-12). The alpha and beta chains form an alternating ring which encloses part of the gamma chain. CF(1) is attached to CF(0) by a central stalk formed by the gamma and epsilon chains, while a peripheral stalk is formed by the delta and b chains.</text>
</comment>
<comment type="subcellular location">
    <subcellularLocation>
        <location evidence="1">Cell inner membrane</location>
        <topology evidence="1">Peripheral membrane protein</topology>
    </subcellularLocation>
</comment>
<comment type="similarity">
    <text evidence="1">Belongs to the ATPase alpha/beta chains family.</text>
</comment>